<comment type="function">
    <text evidence="1">Allows the formation of correctly charged Gln-tRNA(Gln) through the transamidation of misacylated Glu-tRNA(Gln) in the mitochondria. The reaction takes place in the presence of glutamine and ATP through an activated gamma-phospho-Glu-tRNA(Gln). Required for proper protein synthesis within the mitochondrion.</text>
</comment>
<comment type="catalytic activity">
    <reaction evidence="1">
        <text>L-glutamyl-tRNA(Gln) + L-glutamine + ATP + H2O = L-glutaminyl-tRNA(Gln) + L-glutamate + ADP + phosphate + H(+)</text>
        <dbReference type="Rhea" id="RHEA:17521"/>
        <dbReference type="Rhea" id="RHEA-COMP:9681"/>
        <dbReference type="Rhea" id="RHEA-COMP:9684"/>
        <dbReference type="ChEBI" id="CHEBI:15377"/>
        <dbReference type="ChEBI" id="CHEBI:15378"/>
        <dbReference type="ChEBI" id="CHEBI:29985"/>
        <dbReference type="ChEBI" id="CHEBI:30616"/>
        <dbReference type="ChEBI" id="CHEBI:43474"/>
        <dbReference type="ChEBI" id="CHEBI:58359"/>
        <dbReference type="ChEBI" id="CHEBI:78520"/>
        <dbReference type="ChEBI" id="CHEBI:78521"/>
        <dbReference type="ChEBI" id="CHEBI:456216"/>
    </reaction>
</comment>
<comment type="subunit">
    <text evidence="1">Subunit of the heterotrimeric GatFAB amidotransferase (AdT) complex, composed of A, B and F subunits.</text>
</comment>
<comment type="subcellular location">
    <subcellularLocation>
        <location evidence="1">Mitochondrion inner membrane</location>
        <topology evidence="1">Peripheral membrane protein</topology>
        <orientation evidence="1">Matrix side</orientation>
    </subcellularLocation>
</comment>
<comment type="similarity">
    <text evidence="1">Belongs to the GatF family.</text>
</comment>
<comment type="sequence caution" evidence="3">
    <conflict type="erroneous initiation">
        <sequence resource="EMBL-CDS" id="ABN66527"/>
    </conflict>
    <text>Truncated N-terminus.</text>
</comment>
<organism>
    <name type="scientific">Scheffersomyces stipitis (strain ATCC 58785 / CBS 6054 / NBRC 10063 / NRRL Y-11545)</name>
    <name type="common">Yeast</name>
    <name type="synonym">Pichia stipitis</name>
    <dbReference type="NCBI Taxonomy" id="322104"/>
    <lineage>
        <taxon>Eukaryota</taxon>
        <taxon>Fungi</taxon>
        <taxon>Dikarya</taxon>
        <taxon>Ascomycota</taxon>
        <taxon>Saccharomycotina</taxon>
        <taxon>Pichiomycetes</taxon>
        <taxon>Debaryomycetaceae</taxon>
        <taxon>Scheffersomyces</taxon>
    </lineage>
</organism>
<reference key="1">
    <citation type="journal article" date="2007" name="Nat. Biotechnol.">
        <title>Genome sequence of the lignocellulose-bioconverting and xylose-fermenting yeast Pichia stipitis.</title>
        <authorList>
            <person name="Jeffries T.W."/>
            <person name="Grigoriev I.V."/>
            <person name="Grimwood J."/>
            <person name="Laplaza J.M."/>
            <person name="Aerts A."/>
            <person name="Salamov A."/>
            <person name="Schmutz J."/>
            <person name="Lindquist E."/>
            <person name="Dehal P."/>
            <person name="Shapiro H."/>
            <person name="Jin Y.-S."/>
            <person name="Passoth V."/>
            <person name="Richardson P.M."/>
        </authorList>
    </citation>
    <scope>NUCLEOTIDE SEQUENCE [LARGE SCALE GENOMIC DNA]</scope>
    <source>
        <strain>ATCC 58785 / CBS 6054 / NBRC 10063 / NRRL Y-11545</strain>
    </source>
</reference>
<proteinExistence type="inferred from homology"/>
<sequence length="177" mass="19812">MIRINSRGLTVSTRRFQTLSKIGSTLKTKEDIRNALNSPVWSLKELISSNEKDMKSVEVSAKTINKVLKLSAFDTNITAEQEKSLVSALSAQMVFIKHLYENDEKSDSVVEENDTHFRLIASDHNPGEPLTLKQLLAQIEELPEKVDPAKGETQGSFNVANMNPRNRPFATIRSKQG</sequence>
<name>GATF_PICST</name>
<gene>
    <name evidence="1" type="primary">GTF1</name>
    <name type="ORF">PICST_59241</name>
</gene>
<feature type="transit peptide" description="Mitochondrion" evidence="1">
    <location>
        <begin position="1"/>
        <end position="16"/>
    </location>
</feature>
<feature type="chain" id="PRO_0000413406" description="Glutamyl-tRNA(Gln) amidotransferase subunit F, mitochondrial">
    <location>
        <begin position="17"/>
        <end position="177"/>
    </location>
</feature>
<feature type="region of interest" description="Disordered" evidence="2">
    <location>
        <begin position="148"/>
        <end position="177"/>
    </location>
</feature>
<feature type="compositionally biased region" description="Polar residues" evidence="2">
    <location>
        <begin position="153"/>
        <end position="164"/>
    </location>
</feature>
<accession>A3LU55</accession>
<dbReference type="EC" id="6.3.5.-" evidence="1"/>
<dbReference type="EMBL" id="CP000498">
    <property type="protein sequence ID" value="ABN66527.2"/>
    <property type="status" value="ALT_INIT"/>
    <property type="molecule type" value="Genomic_DNA"/>
</dbReference>
<dbReference type="RefSeq" id="XP_001384556.2">
    <property type="nucleotide sequence ID" value="XM_001384519.1"/>
</dbReference>
<dbReference type="SMR" id="A3LU55"/>
<dbReference type="FunCoup" id="A3LU55">
    <property type="interactions" value="77"/>
</dbReference>
<dbReference type="STRING" id="322104.A3LU55"/>
<dbReference type="GeneID" id="4838781"/>
<dbReference type="KEGG" id="pic:PICST_59241"/>
<dbReference type="eggNOG" id="ENOG502RK44">
    <property type="taxonomic scope" value="Eukaryota"/>
</dbReference>
<dbReference type="HOGENOM" id="CLU_127195_0_0_1"/>
<dbReference type="InParanoid" id="A3LU55"/>
<dbReference type="OrthoDB" id="4024285at2759"/>
<dbReference type="Proteomes" id="UP000002258">
    <property type="component" value="Chromosome 4"/>
</dbReference>
<dbReference type="GO" id="GO:0030956">
    <property type="term" value="C:glutamyl-tRNA(Gln) amidotransferase complex"/>
    <property type="evidence" value="ECO:0007669"/>
    <property type="project" value="UniProtKB-UniRule"/>
</dbReference>
<dbReference type="GO" id="GO:0005743">
    <property type="term" value="C:mitochondrial inner membrane"/>
    <property type="evidence" value="ECO:0007669"/>
    <property type="project" value="UniProtKB-SubCell"/>
</dbReference>
<dbReference type="GO" id="GO:0005524">
    <property type="term" value="F:ATP binding"/>
    <property type="evidence" value="ECO:0007669"/>
    <property type="project" value="UniProtKB-KW"/>
</dbReference>
<dbReference type="GO" id="GO:0050567">
    <property type="term" value="F:glutaminyl-tRNA synthase (glutamine-hydrolyzing) activity"/>
    <property type="evidence" value="ECO:0007669"/>
    <property type="project" value="UniProtKB-UniRule"/>
</dbReference>
<dbReference type="GO" id="GO:0070681">
    <property type="term" value="P:glutaminyl-tRNAGln biosynthesis via transamidation"/>
    <property type="evidence" value="ECO:0007669"/>
    <property type="project" value="UniProtKB-UniRule"/>
</dbReference>
<dbReference type="GO" id="GO:0032543">
    <property type="term" value="P:mitochondrial translation"/>
    <property type="evidence" value="ECO:0007669"/>
    <property type="project" value="UniProtKB-UniRule"/>
</dbReference>
<dbReference type="CDD" id="cd21422">
    <property type="entry name" value="GatF"/>
    <property type="match status" value="1"/>
</dbReference>
<dbReference type="HAMAP" id="MF_03151">
    <property type="entry name" value="GatF"/>
    <property type="match status" value="1"/>
</dbReference>
<dbReference type="InterPro" id="IPR027499">
    <property type="entry name" value="GatF"/>
</dbReference>
<dbReference type="Pfam" id="PF20977">
    <property type="entry name" value="GatF"/>
    <property type="match status" value="1"/>
</dbReference>
<evidence type="ECO:0000255" key="1">
    <source>
        <dbReference type="HAMAP-Rule" id="MF_03151"/>
    </source>
</evidence>
<evidence type="ECO:0000256" key="2">
    <source>
        <dbReference type="SAM" id="MobiDB-lite"/>
    </source>
</evidence>
<evidence type="ECO:0000305" key="3"/>
<keyword id="KW-0067">ATP-binding</keyword>
<keyword id="KW-0436">Ligase</keyword>
<keyword id="KW-0472">Membrane</keyword>
<keyword id="KW-0496">Mitochondrion</keyword>
<keyword id="KW-0999">Mitochondrion inner membrane</keyword>
<keyword id="KW-0547">Nucleotide-binding</keyword>
<keyword id="KW-0648">Protein biosynthesis</keyword>
<keyword id="KW-1185">Reference proteome</keyword>
<keyword id="KW-0809">Transit peptide</keyword>
<protein>
    <recommendedName>
        <fullName evidence="1">Glutamyl-tRNA(Gln) amidotransferase subunit F, mitochondrial</fullName>
        <shortName evidence="1">Glu-AdT subunit F</shortName>
        <ecNumber evidence="1">6.3.5.-</ecNumber>
    </recommendedName>
</protein>